<protein>
    <recommendedName>
        <fullName evidence="1">GTPase Obg</fullName>
        <ecNumber evidence="1">3.6.5.-</ecNumber>
    </recommendedName>
    <alternativeName>
        <fullName evidence="1">GTP-binding protein Obg</fullName>
    </alternativeName>
</protein>
<reference key="1">
    <citation type="journal article" date="1999" name="Nature">
        <title>Evidence for lateral gene transfer between Archaea and Bacteria from genome sequence of Thermotoga maritima.</title>
        <authorList>
            <person name="Nelson K.E."/>
            <person name="Clayton R.A."/>
            <person name="Gill S.R."/>
            <person name="Gwinn M.L."/>
            <person name="Dodson R.J."/>
            <person name="Haft D.H."/>
            <person name="Hickey E.K."/>
            <person name="Peterson J.D."/>
            <person name="Nelson W.C."/>
            <person name="Ketchum K.A."/>
            <person name="McDonald L.A."/>
            <person name="Utterback T.R."/>
            <person name="Malek J.A."/>
            <person name="Linher K.D."/>
            <person name="Garrett M.M."/>
            <person name="Stewart A.M."/>
            <person name="Cotton M.D."/>
            <person name="Pratt M.S."/>
            <person name="Phillips C.A."/>
            <person name="Richardson D.L."/>
            <person name="Heidelberg J.F."/>
            <person name="Sutton G.G."/>
            <person name="Fleischmann R.D."/>
            <person name="Eisen J.A."/>
            <person name="White O."/>
            <person name="Salzberg S.L."/>
            <person name="Smith H.O."/>
            <person name="Venter J.C."/>
            <person name="Fraser C.M."/>
        </authorList>
    </citation>
    <scope>NUCLEOTIDE SEQUENCE [LARGE SCALE GENOMIC DNA]</scope>
    <source>
        <strain>ATCC 43589 / DSM 3109 / JCM 10099 / NBRC 100826 / MSB8</strain>
    </source>
</reference>
<gene>
    <name evidence="1" type="primary">obg</name>
    <name type="ordered locus">TM_0098</name>
</gene>
<name>OBG_THEMA</name>
<dbReference type="EC" id="3.6.5.-" evidence="1"/>
<dbReference type="EMBL" id="AE000512">
    <property type="protein sequence ID" value="AAD35192.1"/>
    <property type="molecule type" value="Genomic_DNA"/>
</dbReference>
<dbReference type="PIR" id="B72418">
    <property type="entry name" value="B72418"/>
</dbReference>
<dbReference type="RefSeq" id="NP_227914.1">
    <property type="nucleotide sequence ID" value="NC_000853.1"/>
</dbReference>
<dbReference type="RefSeq" id="WP_004082646.1">
    <property type="nucleotide sequence ID" value="NC_000853.1"/>
</dbReference>
<dbReference type="SMR" id="Q9WXV3"/>
<dbReference type="FunCoup" id="Q9WXV3">
    <property type="interactions" value="326"/>
</dbReference>
<dbReference type="STRING" id="243274.TM_0098"/>
<dbReference type="PaxDb" id="243274-THEMA_04315"/>
<dbReference type="DNASU" id="896925"/>
<dbReference type="EnsemblBacteria" id="AAD35192">
    <property type="protein sequence ID" value="AAD35192"/>
    <property type="gene ID" value="TM_0098"/>
</dbReference>
<dbReference type="KEGG" id="tma:TM0098"/>
<dbReference type="KEGG" id="tmm:Tmari_0095"/>
<dbReference type="KEGG" id="tmw:THMA_0094"/>
<dbReference type="eggNOG" id="COG0536">
    <property type="taxonomic scope" value="Bacteria"/>
</dbReference>
<dbReference type="InParanoid" id="Q9WXV3"/>
<dbReference type="OrthoDB" id="9807318at2"/>
<dbReference type="Proteomes" id="UP000008183">
    <property type="component" value="Chromosome"/>
</dbReference>
<dbReference type="GO" id="GO:0005737">
    <property type="term" value="C:cytoplasm"/>
    <property type="evidence" value="ECO:0007669"/>
    <property type="project" value="UniProtKB-SubCell"/>
</dbReference>
<dbReference type="GO" id="GO:0005525">
    <property type="term" value="F:GTP binding"/>
    <property type="evidence" value="ECO:0000318"/>
    <property type="project" value="GO_Central"/>
</dbReference>
<dbReference type="GO" id="GO:0003924">
    <property type="term" value="F:GTPase activity"/>
    <property type="evidence" value="ECO:0000318"/>
    <property type="project" value="GO_Central"/>
</dbReference>
<dbReference type="GO" id="GO:0000287">
    <property type="term" value="F:magnesium ion binding"/>
    <property type="evidence" value="ECO:0007669"/>
    <property type="project" value="InterPro"/>
</dbReference>
<dbReference type="GO" id="GO:0042254">
    <property type="term" value="P:ribosome biogenesis"/>
    <property type="evidence" value="ECO:0007669"/>
    <property type="project" value="UniProtKB-UniRule"/>
</dbReference>
<dbReference type="CDD" id="cd01898">
    <property type="entry name" value="Obg"/>
    <property type="match status" value="1"/>
</dbReference>
<dbReference type="FunFam" id="2.70.210.12:FF:000001">
    <property type="entry name" value="GTPase Obg"/>
    <property type="match status" value="1"/>
</dbReference>
<dbReference type="Gene3D" id="3.30.300.350">
    <property type="entry name" value="GTP-binding protein OBG, C-terminal domain"/>
    <property type="match status" value="1"/>
</dbReference>
<dbReference type="Gene3D" id="2.70.210.12">
    <property type="entry name" value="GTP1/OBG domain"/>
    <property type="match status" value="1"/>
</dbReference>
<dbReference type="Gene3D" id="3.40.50.300">
    <property type="entry name" value="P-loop containing nucleotide triphosphate hydrolases"/>
    <property type="match status" value="1"/>
</dbReference>
<dbReference type="HAMAP" id="MF_01454">
    <property type="entry name" value="GTPase_Obg"/>
    <property type="match status" value="1"/>
</dbReference>
<dbReference type="InterPro" id="IPR031167">
    <property type="entry name" value="G_OBG"/>
</dbReference>
<dbReference type="InterPro" id="IPR006073">
    <property type="entry name" value="GTP-bd"/>
</dbReference>
<dbReference type="InterPro" id="IPR014100">
    <property type="entry name" value="GTP-bd_Obg/CgtA"/>
</dbReference>
<dbReference type="InterPro" id="IPR036346">
    <property type="entry name" value="GTP-bd_prot_GTP1/OBG_C_sf"/>
</dbReference>
<dbReference type="InterPro" id="IPR006074">
    <property type="entry name" value="GTP1-OBG_CS"/>
</dbReference>
<dbReference type="InterPro" id="IPR006169">
    <property type="entry name" value="GTP1_OBG_dom"/>
</dbReference>
<dbReference type="InterPro" id="IPR036726">
    <property type="entry name" value="GTP1_OBG_dom_sf"/>
</dbReference>
<dbReference type="InterPro" id="IPR045086">
    <property type="entry name" value="OBG_GTPase"/>
</dbReference>
<dbReference type="InterPro" id="IPR015349">
    <property type="entry name" value="OCT_dom"/>
</dbReference>
<dbReference type="InterPro" id="IPR027417">
    <property type="entry name" value="P-loop_NTPase"/>
</dbReference>
<dbReference type="InterPro" id="IPR005225">
    <property type="entry name" value="Small_GTP-bd"/>
</dbReference>
<dbReference type="NCBIfam" id="TIGR02729">
    <property type="entry name" value="Obg_CgtA"/>
    <property type="match status" value="1"/>
</dbReference>
<dbReference type="NCBIfam" id="TIGR03595">
    <property type="entry name" value="Obg_CgtA_exten"/>
    <property type="match status" value="1"/>
</dbReference>
<dbReference type="NCBIfam" id="NF008954">
    <property type="entry name" value="PRK12296.1"/>
    <property type="match status" value="1"/>
</dbReference>
<dbReference type="NCBIfam" id="NF008955">
    <property type="entry name" value="PRK12297.1"/>
    <property type="match status" value="1"/>
</dbReference>
<dbReference type="NCBIfam" id="NF008956">
    <property type="entry name" value="PRK12299.1"/>
    <property type="match status" value="1"/>
</dbReference>
<dbReference type="NCBIfam" id="TIGR00231">
    <property type="entry name" value="small_GTP"/>
    <property type="match status" value="1"/>
</dbReference>
<dbReference type="PANTHER" id="PTHR11702">
    <property type="entry name" value="DEVELOPMENTALLY REGULATED GTP-BINDING PROTEIN-RELATED"/>
    <property type="match status" value="1"/>
</dbReference>
<dbReference type="PANTHER" id="PTHR11702:SF31">
    <property type="entry name" value="MITOCHONDRIAL RIBOSOME-ASSOCIATED GTPASE 2"/>
    <property type="match status" value="1"/>
</dbReference>
<dbReference type="Pfam" id="PF09269">
    <property type="entry name" value="DUF1967"/>
    <property type="match status" value="1"/>
</dbReference>
<dbReference type="Pfam" id="PF01018">
    <property type="entry name" value="GTP1_OBG"/>
    <property type="match status" value="1"/>
</dbReference>
<dbReference type="Pfam" id="PF01926">
    <property type="entry name" value="MMR_HSR1"/>
    <property type="match status" value="1"/>
</dbReference>
<dbReference type="PIRSF" id="PIRSF002401">
    <property type="entry name" value="GTP_bd_Obg/CgtA"/>
    <property type="match status" value="1"/>
</dbReference>
<dbReference type="PRINTS" id="PR00326">
    <property type="entry name" value="GTP1OBG"/>
</dbReference>
<dbReference type="SUPFAM" id="SSF102741">
    <property type="entry name" value="Obg GTP-binding protein C-terminal domain"/>
    <property type="match status" value="1"/>
</dbReference>
<dbReference type="SUPFAM" id="SSF82051">
    <property type="entry name" value="Obg GTP-binding protein N-terminal domain"/>
    <property type="match status" value="1"/>
</dbReference>
<dbReference type="SUPFAM" id="SSF52540">
    <property type="entry name" value="P-loop containing nucleoside triphosphate hydrolases"/>
    <property type="match status" value="1"/>
</dbReference>
<dbReference type="PROSITE" id="PS51710">
    <property type="entry name" value="G_OBG"/>
    <property type="match status" value="1"/>
</dbReference>
<dbReference type="PROSITE" id="PS00905">
    <property type="entry name" value="GTP1_OBG"/>
    <property type="match status" value="1"/>
</dbReference>
<dbReference type="PROSITE" id="PS51883">
    <property type="entry name" value="OBG"/>
    <property type="match status" value="1"/>
</dbReference>
<dbReference type="PROSITE" id="PS51881">
    <property type="entry name" value="OCT"/>
    <property type="match status" value="1"/>
</dbReference>
<evidence type="ECO:0000255" key="1">
    <source>
        <dbReference type="HAMAP-Rule" id="MF_01454"/>
    </source>
</evidence>
<evidence type="ECO:0000255" key="2">
    <source>
        <dbReference type="PROSITE-ProRule" id="PRU01229"/>
    </source>
</evidence>
<evidence type="ECO:0000255" key="3">
    <source>
        <dbReference type="PROSITE-ProRule" id="PRU01231"/>
    </source>
</evidence>
<feature type="chain" id="PRO_0000386356" description="GTPase Obg">
    <location>
        <begin position="1"/>
        <end position="435"/>
    </location>
</feature>
<feature type="domain" description="Obg" evidence="3">
    <location>
        <begin position="6"/>
        <end position="164"/>
    </location>
</feature>
<feature type="domain" description="OBG-type G" evidence="1">
    <location>
        <begin position="165"/>
        <end position="335"/>
    </location>
</feature>
<feature type="domain" description="OCT" evidence="2">
    <location>
        <begin position="357"/>
        <end position="435"/>
    </location>
</feature>
<feature type="binding site" evidence="1">
    <location>
        <begin position="171"/>
        <end position="178"/>
    </location>
    <ligand>
        <name>GTP</name>
        <dbReference type="ChEBI" id="CHEBI:37565"/>
    </ligand>
</feature>
<feature type="binding site" evidence="1">
    <location>
        <position position="178"/>
    </location>
    <ligand>
        <name>Mg(2+)</name>
        <dbReference type="ChEBI" id="CHEBI:18420"/>
    </ligand>
</feature>
<feature type="binding site" evidence="1">
    <location>
        <begin position="196"/>
        <end position="200"/>
    </location>
    <ligand>
        <name>GTP</name>
        <dbReference type="ChEBI" id="CHEBI:37565"/>
    </ligand>
</feature>
<feature type="binding site" evidence="1">
    <location>
        <position position="198"/>
    </location>
    <ligand>
        <name>Mg(2+)</name>
        <dbReference type="ChEBI" id="CHEBI:18420"/>
    </ligand>
</feature>
<feature type="binding site" evidence="1">
    <location>
        <begin position="217"/>
        <end position="220"/>
    </location>
    <ligand>
        <name>GTP</name>
        <dbReference type="ChEBI" id="CHEBI:37565"/>
    </ligand>
</feature>
<feature type="binding site" evidence="1">
    <location>
        <begin position="287"/>
        <end position="290"/>
    </location>
    <ligand>
        <name>GTP</name>
        <dbReference type="ChEBI" id="CHEBI:37565"/>
    </ligand>
</feature>
<feature type="binding site" evidence="1">
    <location>
        <begin position="316"/>
        <end position="318"/>
    </location>
    <ligand>
        <name>GTP</name>
        <dbReference type="ChEBI" id="CHEBI:37565"/>
    </ligand>
</feature>
<sequence>MNIERADFVDRVKIFVKAGDGGNGCVSFRREKYVPKGGPDGGDGGNGGFVFLRANPSVSTLIEFVNKRKFMAENGKHGMGKKMKGRNGKDLFIDVPVGTVVKDAVTGEVIADLNEPGKIVCVARGGRGGRGNAHFATSIKQAPLIAERGEKGESRWLELELKILADVGLVGYPNVGKSSLISRISNARPKIANYPFTTLIPNLGVVKYDDFSFVVADIPGLIEGASEGVGLGNVFLRHVERCYLIAHVIDVSGYEREDPVRDYFVIREEMKKYSPFLLEKPEIVVANKIDLIGKEELEKILKRLRDATNREVIPVSAVTGEGIDLLVSKLASIVREMKVEKPERKEEKFVKPSPVWRRLPEKFHLEVVKEDEGYWVVEGENLRVWIERFDLNQRDARLMLLQVLEKNGLNNKLKEAGVKEGDVVRIGDFEFEYRE</sequence>
<organism>
    <name type="scientific">Thermotoga maritima (strain ATCC 43589 / DSM 3109 / JCM 10099 / NBRC 100826 / MSB8)</name>
    <dbReference type="NCBI Taxonomy" id="243274"/>
    <lineage>
        <taxon>Bacteria</taxon>
        <taxon>Thermotogati</taxon>
        <taxon>Thermotogota</taxon>
        <taxon>Thermotogae</taxon>
        <taxon>Thermotogales</taxon>
        <taxon>Thermotogaceae</taxon>
        <taxon>Thermotoga</taxon>
    </lineage>
</organism>
<keyword id="KW-0963">Cytoplasm</keyword>
<keyword id="KW-0342">GTP-binding</keyword>
<keyword id="KW-0378">Hydrolase</keyword>
<keyword id="KW-0460">Magnesium</keyword>
<keyword id="KW-0479">Metal-binding</keyword>
<keyword id="KW-0547">Nucleotide-binding</keyword>
<keyword id="KW-1185">Reference proteome</keyword>
<proteinExistence type="inferred from homology"/>
<accession>Q9WXV3</accession>
<comment type="function">
    <text evidence="1">An essential GTPase which binds GTP, GDP and possibly (p)ppGpp with moderate affinity, with high nucleotide exchange rates and a fairly low GTP hydrolysis rate. Plays a role in control of the cell cycle, stress response, ribosome biogenesis and in those bacteria that undergo differentiation, in morphogenesis control.</text>
</comment>
<comment type="cofactor">
    <cofactor evidence="1">
        <name>Mg(2+)</name>
        <dbReference type="ChEBI" id="CHEBI:18420"/>
    </cofactor>
</comment>
<comment type="subunit">
    <text evidence="1">Monomer.</text>
</comment>
<comment type="subcellular location">
    <subcellularLocation>
        <location evidence="1">Cytoplasm</location>
    </subcellularLocation>
</comment>
<comment type="similarity">
    <text evidence="1">Belongs to the TRAFAC class OBG-HflX-like GTPase superfamily. OBG GTPase family.</text>
</comment>